<keyword id="KW-0029">Amino-acid transport</keyword>
<keyword id="KW-1015">Disulfide bond</keyword>
<keyword id="KW-0325">Glycoprotein</keyword>
<keyword id="KW-0472">Membrane</keyword>
<keyword id="KW-1185">Reference proteome</keyword>
<keyword id="KW-0812">Transmembrane</keyword>
<keyword id="KW-1133">Transmembrane helix</keyword>
<keyword id="KW-0813">Transport</keyword>
<keyword id="KW-0926">Vacuole</keyword>
<accession>Q9GSD3</accession>
<evidence type="ECO:0000250" key="1">
    <source>
        <dbReference type="UniProtKB" id="Q9N623"/>
    </source>
</evidence>
<evidence type="ECO:0000250" key="2">
    <source>
        <dbReference type="UniProtKB" id="W7FI62"/>
    </source>
</evidence>
<evidence type="ECO:0000255" key="3"/>
<evidence type="ECO:0000256" key="4">
    <source>
        <dbReference type="SAM" id="MobiDB-lite"/>
    </source>
</evidence>
<evidence type="ECO:0000269" key="5">
    <source>
    </source>
</evidence>
<evidence type="ECO:0000269" key="6">
    <source>
    </source>
</evidence>
<evidence type="ECO:0000303" key="7">
    <source>
    </source>
</evidence>
<evidence type="ECO:0000305" key="8"/>
<feature type="chain" id="PRO_0000385360" description="Chloroquine resistance transporter">
    <location>
        <begin position="1"/>
        <end position="424"/>
    </location>
</feature>
<feature type="topological domain" description="Cytoplasmic" evidence="8">
    <location>
        <begin position="1"/>
        <end position="57"/>
    </location>
</feature>
<feature type="transmembrane region" description="Helical" evidence="3">
    <location>
        <begin position="58"/>
        <end position="78"/>
    </location>
</feature>
<feature type="topological domain" description="Vacuolar" evidence="8">
    <location>
        <begin position="79"/>
        <end position="89"/>
    </location>
</feature>
<feature type="transmembrane region" description="Helical" evidence="3">
    <location>
        <begin position="90"/>
        <end position="110"/>
    </location>
</feature>
<feature type="topological domain" description="Cytoplasmic" evidence="8">
    <location>
        <begin position="111"/>
        <end position="124"/>
    </location>
</feature>
<feature type="transmembrane region" description="Helical" evidence="3">
    <location>
        <begin position="125"/>
        <end position="145"/>
    </location>
</feature>
<feature type="topological domain" description="Vacuolar" evidence="8">
    <location>
        <begin position="146"/>
        <end position="153"/>
    </location>
</feature>
<feature type="transmembrane region" description="Helical" evidence="3">
    <location>
        <begin position="154"/>
        <end position="174"/>
    </location>
</feature>
<feature type="topological domain" description="Cytoplasmic" evidence="8">
    <location>
        <begin position="175"/>
        <end position="179"/>
    </location>
</feature>
<feature type="transmembrane region" description="Helical" evidence="3">
    <location>
        <begin position="180"/>
        <end position="200"/>
    </location>
</feature>
<feature type="topological domain" description="Vacuolar" evidence="8">
    <location>
        <begin position="201"/>
        <end position="208"/>
    </location>
</feature>
<feature type="transmembrane region" description="Helical" evidence="3">
    <location>
        <begin position="209"/>
        <end position="229"/>
    </location>
</feature>
<feature type="topological domain" description="Cytoplasmic" evidence="8">
    <location>
        <begin position="230"/>
        <end position="246"/>
    </location>
</feature>
<feature type="transmembrane region" description="Helical" evidence="3">
    <location>
        <begin position="247"/>
        <end position="267"/>
    </location>
</feature>
<feature type="topological domain" description="Vacuolar" evidence="8">
    <location>
        <begin position="268"/>
        <end position="316"/>
    </location>
</feature>
<feature type="transmembrane region" description="Helical" evidence="3">
    <location>
        <begin position="317"/>
        <end position="337"/>
    </location>
</feature>
<feature type="topological domain" description="Cytoplasmic" evidence="8">
    <location>
        <begin position="338"/>
        <end position="345"/>
    </location>
</feature>
<feature type="transmembrane region" description="Helical" evidence="3">
    <location>
        <begin position="346"/>
        <end position="366"/>
    </location>
</feature>
<feature type="topological domain" description="Vacuolar" evidence="8">
    <location>
        <begin position="367"/>
        <end position="376"/>
    </location>
</feature>
<feature type="transmembrane region" description="Helical" evidence="3">
    <location>
        <begin position="377"/>
        <end position="397"/>
    </location>
</feature>
<feature type="topological domain" description="Cytoplasmic" evidence="8">
    <location>
        <begin position="398"/>
        <end position="424"/>
    </location>
</feature>
<feature type="region of interest" description="Disordered" evidence="4">
    <location>
        <begin position="1"/>
        <end position="32"/>
    </location>
</feature>
<feature type="compositionally biased region" description="Basic residues" evidence="4">
    <location>
        <begin position="1"/>
        <end position="10"/>
    </location>
</feature>
<feature type="compositionally biased region" description="Basic and acidic residues" evidence="4">
    <location>
        <begin position="16"/>
        <end position="29"/>
    </location>
</feature>
<feature type="glycosylation site" description="N-linked (GlcNAc...) asparagine" evidence="3">
    <location>
        <position position="87"/>
    </location>
</feature>
<feature type="disulfide bond" evidence="2">
    <location>
        <begin position="288"/>
        <end position="311"/>
    </location>
</feature>
<feature type="disulfide bond" evidence="2">
    <location>
        <begin position="300"/>
        <end position="308"/>
    </location>
</feature>
<feature type="sequence variant" evidence="5">
    <original>Q</original>
    <variation>H</variation>
    <location>
        <position position="34"/>
    </location>
</feature>
<feature type="sequence variant" evidence="5">
    <original>P</original>
    <variation>L</variation>
    <location>
        <position position="38"/>
    </location>
</feature>
<feature type="sequence variant" evidence="5">
    <original>L</original>
    <variation>F</variation>
    <location>
        <position position="384"/>
    </location>
</feature>
<feature type="mutagenesis site" description="Increases amodiaquine transport with no significant effect on chloroquine transport." evidence="6">
    <original>K</original>
    <variation>KK</variation>
    <location>
        <position position="9"/>
    </location>
</feature>
<feature type="mutagenesis site" description="Increases amodiaquine transport with no significant effect on chloroquine transport; when associated with L-38." evidence="6">
    <original>Q</original>
    <variation>H</variation>
    <location>
        <position position="34"/>
    </location>
</feature>
<feature type="mutagenesis site" description="Increases amodiaquine transport with no significant effect on chloroquine transport; when associated with H-34." evidence="6">
    <original>P</original>
    <variation>L</variation>
    <location>
        <position position="38"/>
    </location>
</feature>
<feature type="mutagenesis site" description="Increases amodiaquine transport and decreases chloroquine transport." evidence="6">
    <original>L</original>
    <variation>S</variation>
    <location>
        <position position="47"/>
    </location>
</feature>
<feature type="mutagenesis site" description="Increases amodiaquine transport with no significant effect on chloroquine transport; when associated with C-390." evidence="6">
    <original>L</original>
    <variation>P</variation>
    <location>
        <position position="242"/>
    </location>
</feature>
<feature type="mutagenesis site" description="Increases amodiaquine and chloroquine transport." evidence="6">
    <original>S</original>
    <variation>P</variation>
    <location>
        <position position="249"/>
    </location>
</feature>
<feature type="mutagenesis site" description="Decreases chloroquine transport with no significant effect on amodiaquine transport." evidence="6">
    <original>F</original>
    <variation>V</variation>
    <location>
        <position position="275"/>
    </location>
</feature>
<feature type="mutagenesis site" description="Increases amodiaquine transport with no significant effect on chloroquine transport." evidence="6">
    <original>L</original>
    <variation>F</variation>
    <location>
        <position position="384"/>
    </location>
</feature>
<feature type="mutagenesis site" description="Increases amodiaquine transport with no significant effect on chloroquine transport; when associated with P-242." evidence="6">
    <original>Y</original>
    <variation>C</variation>
    <location>
        <position position="390"/>
    </location>
</feature>
<protein>
    <recommendedName>
        <fullName evidence="8">Chloroquine resistance transporter</fullName>
    </recommendedName>
    <alternativeName>
        <fullName>Probable transporter cg10</fullName>
        <shortName evidence="7">PvCRT</shortName>
        <shortName>pvcg10</shortName>
    </alternativeName>
    <alternativeName>
        <fullName>pfcrt ortholog</fullName>
        <shortName>pvcrt-o</shortName>
    </alternativeName>
</protein>
<reference key="1">
    <citation type="journal article" date="2001" name="J. Infect. Dis.">
        <title>Evidence for different mechanisms of chloroquine resistance in 2 Plasmodium species that cause human malaria.</title>
        <authorList>
            <person name="Nomura T."/>
            <person name="Carlton J.M.-R."/>
            <person name="Baird J.K."/>
            <person name="del Portillo H.A."/>
            <person name="Fryauff D.J."/>
            <person name="Rathore D."/>
            <person name="Fidock D.A."/>
            <person name="Su X.-Z."/>
            <person name="Collins W.E."/>
            <person name="McCutchan T.F."/>
            <person name="Wootton J.C."/>
            <person name="Wellems T.E."/>
        </authorList>
    </citation>
    <scope>NUCLEOTIDE SEQUENCE [GENOMIC DNA]</scope>
    <scope>VARIANTS HIS-34; LEU-38 AND PHE-384</scope>
    <source>
        <strain>Salvador I</strain>
    </source>
</reference>
<reference key="2">
    <citation type="submission" date="2007-12" db="EMBL/GenBank/DDBJ databases">
        <title>Primary sequences of pvmdr1 and pvcrt-o genes from chloroquine sensitive and chloroquine resistance Brazilian isolates.</title>
        <authorList>
            <person name="Orjuela-Sanchez P."/>
            <person name="del Portillo H.A."/>
        </authorList>
    </citation>
    <scope>NUCLEOTIDE SEQUENCE [GENOMIC DNA]</scope>
    <source>
        <strain>MCQS2</strain>
    </source>
</reference>
<reference key="3">
    <citation type="journal article" date="2008" name="Nature">
        <title>Comparative genomics of the neglected human malaria parasite Plasmodium vivax.</title>
        <authorList>
            <person name="Carlton J.M."/>
            <person name="Adams J.H."/>
            <person name="Silva J.C."/>
            <person name="Bidwell S.L."/>
            <person name="Lorenzi H."/>
            <person name="Caler E."/>
            <person name="Crabtree J."/>
            <person name="Angiuoli S.V."/>
            <person name="Merino E.F."/>
            <person name="Amedeo P."/>
            <person name="Cheng Q."/>
            <person name="Coulson R.M.R."/>
            <person name="Crabb B.S."/>
            <person name="del Portillo H.A."/>
            <person name="Essien K."/>
            <person name="Feldblyum T.V."/>
            <person name="Fernandez-Becerra C."/>
            <person name="Gilson P.R."/>
            <person name="Gueye A.H."/>
            <person name="Guo X."/>
            <person name="Kang'a S."/>
            <person name="Kooij T.W.A."/>
            <person name="Korsinczky M."/>
            <person name="Meyer E.V.-S."/>
            <person name="Nene V."/>
            <person name="Paulsen I."/>
            <person name="White O."/>
            <person name="Ralph S.A."/>
            <person name="Ren Q."/>
            <person name="Sargeant T.J."/>
            <person name="Salzberg S.L."/>
            <person name="Stoeckert C.J."/>
            <person name="Sullivan S.A."/>
            <person name="Yamamoto M.M."/>
            <person name="Hoffman S.L."/>
            <person name="Wortman J.R."/>
            <person name="Gardner M.J."/>
            <person name="Galinski M.R."/>
            <person name="Barnwell J.W."/>
            <person name="Fraser-Liggett C.M."/>
        </authorList>
    </citation>
    <scope>NUCLEOTIDE SEQUENCE [LARGE SCALE GENOMIC DNA]</scope>
    <source>
        <strain>Salvador I</strain>
    </source>
</reference>
<reference key="4">
    <citation type="journal article" date="2017" name="Biochemistry">
        <title>Analysis of Plasmodium vivax Chloroquine Resistance Transporter Mutant Isoforms.</title>
        <authorList>
            <person name="Hassett M.R."/>
            <person name="Riegel B.E."/>
            <person name="Callaghan P.S."/>
            <person name="Roepe P.D."/>
        </authorList>
    </citation>
    <scope>MUTAGENESIS OF LYS-9; GLN-34; PRO-38; LEU-47; LEU-242; SER-249; PHE-275; LEU-384 AND TYR-390</scope>
    <source>
        <strain evidence="7">Salvador I</strain>
    </source>
</reference>
<organism>
    <name type="scientific">Plasmodium vivax (strain Salvador I)</name>
    <dbReference type="NCBI Taxonomy" id="126793"/>
    <lineage>
        <taxon>Eukaryota</taxon>
        <taxon>Sar</taxon>
        <taxon>Alveolata</taxon>
        <taxon>Apicomplexa</taxon>
        <taxon>Aconoidasida</taxon>
        <taxon>Haemosporida</taxon>
        <taxon>Plasmodiidae</taxon>
        <taxon>Plasmodium</taxon>
        <taxon>Plasmodium (Plasmodium)</taxon>
    </lineage>
</organism>
<dbReference type="EMBL" id="AF314649">
    <property type="protein sequence ID" value="AAG27739.1"/>
    <property type="molecule type" value="Genomic_DNA"/>
</dbReference>
<dbReference type="EMBL" id="EU333970">
    <property type="protein sequence ID" value="ACA35014.1"/>
    <property type="molecule type" value="Genomic_DNA"/>
</dbReference>
<dbReference type="EMBL" id="AAKM01000014">
    <property type="protein sequence ID" value="EDL43730.1"/>
    <property type="molecule type" value="Genomic_DNA"/>
</dbReference>
<dbReference type="RefSeq" id="XP_001613457.1">
    <property type="nucleotide sequence ID" value="XM_001613407.1"/>
</dbReference>
<dbReference type="SMR" id="Q9GSD3"/>
<dbReference type="STRING" id="126793.Q9GSD3"/>
<dbReference type="GlyCosmos" id="Q9GSD3">
    <property type="glycosylation" value="1 site, No reported glycans"/>
</dbReference>
<dbReference type="EnsemblProtists" id="EDL43730">
    <property type="protein sequence ID" value="EDL43730"/>
    <property type="gene ID" value="PVX_087980"/>
</dbReference>
<dbReference type="GeneID" id="5472721"/>
<dbReference type="KEGG" id="pvx:PVX_087980"/>
<dbReference type="VEuPathDB" id="PlasmoDB:PVX_087980"/>
<dbReference type="InParanoid" id="Q9GSD3"/>
<dbReference type="OMA" id="FAYIIPM"/>
<dbReference type="PhylomeDB" id="Q9GSD3"/>
<dbReference type="Proteomes" id="UP000008333">
    <property type="component" value="Chromosome 1"/>
</dbReference>
<dbReference type="GO" id="GO:0005774">
    <property type="term" value="C:vacuolar membrane"/>
    <property type="evidence" value="ECO:0007669"/>
    <property type="project" value="UniProtKB-SubCell"/>
</dbReference>
<dbReference type="GO" id="GO:0042910">
    <property type="term" value="F:xenobiotic transmembrane transporter activity"/>
    <property type="evidence" value="ECO:0007669"/>
    <property type="project" value="InterPro"/>
</dbReference>
<dbReference type="GO" id="GO:0006865">
    <property type="term" value="P:amino acid transport"/>
    <property type="evidence" value="ECO:0007669"/>
    <property type="project" value="UniProtKB-KW"/>
</dbReference>
<dbReference type="InterPro" id="IPR013936">
    <property type="entry name" value="CRT-like"/>
</dbReference>
<dbReference type="InterPro" id="IPR017258">
    <property type="entry name" value="Transprt_Chloroquine"/>
</dbReference>
<dbReference type="PANTHER" id="PTHR31326">
    <property type="entry name" value="PROTEIN CLT2, CHLOROPLASTIC"/>
    <property type="match status" value="1"/>
</dbReference>
<dbReference type="PANTHER" id="PTHR31326:SF1">
    <property type="entry name" value="PROTEIN CLT2, CHLOROPLASTIC"/>
    <property type="match status" value="1"/>
</dbReference>
<dbReference type="Pfam" id="PF08627">
    <property type="entry name" value="CRT-like"/>
    <property type="match status" value="1"/>
</dbReference>
<dbReference type="PIRSF" id="PIRSF037671">
    <property type="entry name" value="Transprt_Chloroquine_res"/>
    <property type="match status" value="1"/>
</dbReference>
<name>CRT_PLAVS</name>
<gene>
    <name evidence="8" type="primary">CRT</name>
    <name type="synonym">CG10</name>
    <name type="synonym">CRT-O</name>
    <name type="ORF">PVX_087980</name>
</gene>
<comment type="function">
    <text evidence="1">Nutrient transporter (By similarity). Involved in maintaining the osmotic homeostasis of the digestive vacuole (By similarity).</text>
</comment>
<comment type="subcellular location">
    <subcellularLocation>
        <location evidence="1">Vacuole membrane</location>
        <topology evidence="3">Multi-pass membrane protein</topology>
    </subcellularLocation>
    <text evidence="1">Localizes to the parasite digestive vacuole, the site of chloroquine action.</text>
</comment>
<comment type="miscellaneous">
    <text evidence="6">Can function as a drug transporter (PubMed:28898049). Can transport chloroquine, primaquine and amodiaquine (PubMed:28898049).</text>
</comment>
<comment type="similarity">
    <text evidence="8">Belongs to the CRT-like transporter family.</text>
</comment>
<sequence>MTILKKKKKGSPQITPDERYRELDSHAQNESEIQEDVPISRKIANFLKLAYNEIRENISIYLLIIVYLCVCVMNKLLAKRTLKKIGNYSFVTSETHNCICMVVFFALYFMFGRRVMSAKERHRNFGVQFLLISLLDACSVIIAFIGLTRTTGNIQSFVMQLSIPINMFFCFLILRYRYHLFNYVGAFIIVVTIAVVEFMLSFETQEENSIVFNLVLIASLIPLSFSNMTREIVFKKYKINILRLNAVVSFFQIFTSCLMLPMYTLPFLKQINLPFSEIGTNIKNGFRCLFLGQNTIVENCGLGMSKMCDDCEGAWKTFIAYSFFNICDNLITSFIIEKFSTMTYTIVSCIQGPAIAIAYYFKFLAGDAVMQPRMLDFVTLFGYLFGSIIYRIGNIILEKKRMMEAGNDDDSEGELTNADSIITH</sequence>
<proteinExistence type="evidence at protein level"/>